<dbReference type="EMBL" id="EF380354">
    <property type="protein sequence ID" value="ABQ52515.1"/>
    <property type="molecule type" value="Genomic_DNA"/>
</dbReference>
<dbReference type="RefSeq" id="YP_001294266.1">
    <property type="nucleotide sequence ID" value="NC_009600.1"/>
</dbReference>
<dbReference type="SMR" id="A6MMU0"/>
<dbReference type="GeneID" id="5236812"/>
<dbReference type="GO" id="GO:0009535">
    <property type="term" value="C:chloroplast thylakoid membrane"/>
    <property type="evidence" value="ECO:0007669"/>
    <property type="project" value="UniProtKB-SubCell"/>
</dbReference>
<dbReference type="GO" id="GO:0009523">
    <property type="term" value="C:photosystem II"/>
    <property type="evidence" value="ECO:0007669"/>
    <property type="project" value="UniProtKB-KW"/>
</dbReference>
<dbReference type="GO" id="GO:0016168">
    <property type="term" value="F:chlorophyll binding"/>
    <property type="evidence" value="ECO:0007669"/>
    <property type="project" value="UniProtKB-UniRule"/>
</dbReference>
<dbReference type="GO" id="GO:0045156">
    <property type="term" value="F:electron transporter, transferring electrons within the cyclic electron transport pathway of photosynthesis activity"/>
    <property type="evidence" value="ECO:0007669"/>
    <property type="project" value="InterPro"/>
</dbReference>
<dbReference type="GO" id="GO:0046872">
    <property type="term" value="F:metal ion binding"/>
    <property type="evidence" value="ECO:0007669"/>
    <property type="project" value="UniProtKB-KW"/>
</dbReference>
<dbReference type="GO" id="GO:0009772">
    <property type="term" value="P:photosynthetic electron transport in photosystem II"/>
    <property type="evidence" value="ECO:0007669"/>
    <property type="project" value="InterPro"/>
</dbReference>
<dbReference type="FunFam" id="1.10.10.670:FF:000001">
    <property type="entry name" value="Photosystem II CP43 reaction center protein"/>
    <property type="match status" value="1"/>
</dbReference>
<dbReference type="Gene3D" id="1.10.10.670">
    <property type="entry name" value="photosystem ii from thermosynechococcus elongatus"/>
    <property type="match status" value="1"/>
</dbReference>
<dbReference type="HAMAP" id="MF_01496">
    <property type="entry name" value="PSII_PsbC_CP43"/>
    <property type="match status" value="1"/>
</dbReference>
<dbReference type="InterPro" id="IPR000932">
    <property type="entry name" value="PS_antenna-like"/>
</dbReference>
<dbReference type="InterPro" id="IPR036001">
    <property type="entry name" value="PS_II_antenna-like_sf"/>
</dbReference>
<dbReference type="InterPro" id="IPR005869">
    <property type="entry name" value="PSII_PsbC"/>
</dbReference>
<dbReference type="InterPro" id="IPR044900">
    <property type="entry name" value="PSII_PsbC_sf"/>
</dbReference>
<dbReference type="NCBIfam" id="TIGR01153">
    <property type="entry name" value="psbC"/>
    <property type="match status" value="1"/>
</dbReference>
<dbReference type="Pfam" id="PF00421">
    <property type="entry name" value="PSII"/>
    <property type="match status" value="1"/>
</dbReference>
<dbReference type="SUPFAM" id="SSF161077">
    <property type="entry name" value="Photosystem II antenna protein-like"/>
    <property type="match status" value="1"/>
</dbReference>
<sequence length="473" mass="51774">MKTLYSLRRFYPVETLFNGTLALAGRDQETTGFAWWAGNARLINLSGKLLGAHVAHAGLIVFWAGAMNLFEVAHFVPEKPMYEQGLILLPHLATLGWGVGPGGEVIDTFPYFVSGVLHLISSAVLGFGGIYHALLGPETLEESFPFFGYVWKDRNKMTTILGIHLILLGIGAFLLVLKALYFGGVYDTWAPGGGDVRRITNLTLSPSVIFGYLLKSPFGGEGWIVSVDDLEDIIGGHVWVGAICILGGTWHILTKPFAWARRALVWSGEAYLSYSLGALSVFGFIACCFVWFNNTAYPSEFYGPTGPEASQAQAFTFLVRDQRLGANVGSAQGPTGLGKYLMRSPTGEVIFGGETMRFWDLRAPWLEPLRGPNGLDLSRLKKDIQPWQERRSAEYMTHAPLGSLNSVGGVATEINAVNYVSPRSWLATSHFVLGFFLFVGHLWHAGRARAAAAGFEKGIDRDFEPVLSMTPLN</sequence>
<proteinExistence type="inferred from homology"/>
<feature type="propeptide" id="PRO_0000431153" evidence="1">
    <location>
        <begin position="1"/>
        <end position="14"/>
    </location>
</feature>
<feature type="chain" id="PRO_0000361398" description="Photosystem II CP43 reaction center protein" evidence="1">
    <location>
        <begin position="15"/>
        <end position="473"/>
    </location>
</feature>
<feature type="transmembrane region" description="Helical" evidence="1">
    <location>
        <begin position="69"/>
        <end position="93"/>
    </location>
</feature>
<feature type="transmembrane region" description="Helical" evidence="1">
    <location>
        <begin position="134"/>
        <end position="155"/>
    </location>
</feature>
<feature type="transmembrane region" description="Helical" evidence="1">
    <location>
        <begin position="178"/>
        <end position="200"/>
    </location>
</feature>
<feature type="transmembrane region" description="Helical" evidence="1">
    <location>
        <begin position="255"/>
        <end position="275"/>
    </location>
</feature>
<feature type="transmembrane region" description="Helical" evidence="1">
    <location>
        <begin position="291"/>
        <end position="312"/>
    </location>
</feature>
<feature type="transmembrane region" description="Helical" evidence="1">
    <location>
        <begin position="447"/>
        <end position="471"/>
    </location>
</feature>
<feature type="binding site" evidence="1">
    <location>
        <position position="367"/>
    </location>
    <ligand>
        <name>[CaMn4O5] cluster</name>
        <dbReference type="ChEBI" id="CHEBI:189552"/>
    </ligand>
</feature>
<feature type="modified residue" description="N-acetylthreonine" evidence="1">
    <location>
        <position position="15"/>
    </location>
</feature>
<feature type="modified residue" description="Phosphothreonine" evidence="1">
    <location>
        <position position="15"/>
    </location>
</feature>
<geneLocation type="chloroplast"/>
<reference key="1">
    <citation type="journal article" date="2007" name="Mol. Phylogenet. Evol.">
        <title>Phylogenetic and evolutionary implications of complete chloroplast genome sequences of four early-diverging angiosperms: Buxus (Buxaceae), Chloranthus (Chloranthaceae), Dioscorea (Dioscoreaceae), and Illicium (Schisandraceae).</title>
        <authorList>
            <person name="Hansen D.R."/>
            <person name="Dastidar S.G."/>
            <person name="Cai Z."/>
            <person name="Penaflor C."/>
            <person name="Kuehl J.V."/>
            <person name="Boore J.L."/>
            <person name="Jansen R.K."/>
        </authorList>
    </citation>
    <scope>NUCLEOTIDE SEQUENCE [LARGE SCALE GENOMIC DNA]</scope>
</reference>
<gene>
    <name evidence="1" type="primary">psbC</name>
</gene>
<protein>
    <recommendedName>
        <fullName evidence="1">Photosystem II CP43 reaction center protein</fullName>
    </recommendedName>
    <alternativeName>
        <fullName evidence="1">PSII 43 kDa protein</fullName>
    </alternativeName>
    <alternativeName>
        <fullName evidence="1">Protein CP-43</fullName>
    </alternativeName>
</protein>
<keyword id="KW-0007">Acetylation</keyword>
<keyword id="KW-0148">Chlorophyll</keyword>
<keyword id="KW-0150">Chloroplast</keyword>
<keyword id="KW-0157">Chromophore</keyword>
<keyword id="KW-0464">Manganese</keyword>
<keyword id="KW-0472">Membrane</keyword>
<keyword id="KW-0479">Metal-binding</keyword>
<keyword id="KW-0597">Phosphoprotein</keyword>
<keyword id="KW-0602">Photosynthesis</keyword>
<keyword id="KW-0604">Photosystem II</keyword>
<keyword id="KW-0934">Plastid</keyword>
<keyword id="KW-0793">Thylakoid</keyword>
<keyword id="KW-0812">Transmembrane</keyword>
<keyword id="KW-1133">Transmembrane helix</keyword>
<accession>A6MMU0</accession>
<organism>
    <name type="scientific">Illicium oligandrum</name>
    <name type="common">Star anise</name>
    <dbReference type="NCBI Taxonomy" id="145286"/>
    <lineage>
        <taxon>Eukaryota</taxon>
        <taxon>Viridiplantae</taxon>
        <taxon>Streptophyta</taxon>
        <taxon>Embryophyta</taxon>
        <taxon>Tracheophyta</taxon>
        <taxon>Spermatophyta</taxon>
        <taxon>Magnoliopsida</taxon>
        <taxon>Austrobaileyales</taxon>
        <taxon>Schisandraceae</taxon>
        <taxon>Illicium</taxon>
    </lineage>
</organism>
<evidence type="ECO:0000255" key="1">
    <source>
        <dbReference type="HAMAP-Rule" id="MF_01496"/>
    </source>
</evidence>
<comment type="function">
    <text evidence="1">One of the components of the core complex of photosystem II (PSII). It binds chlorophyll and helps catalyze the primary light-induced photochemical processes of PSII. PSII is a light-driven water:plastoquinone oxidoreductase, using light energy to abstract electrons from H(2)O, generating O(2) and a proton gradient subsequently used for ATP formation.</text>
</comment>
<comment type="cofactor">
    <text evidence="1">Binds multiple chlorophylls and provides some of the ligands for the Ca-4Mn-5O cluster of the oxygen-evolving complex. It may also provide a ligand for a Cl- that is required for oxygen evolution. PSII binds additional chlorophylls, carotenoids and specific lipids.</text>
</comment>
<comment type="subunit">
    <text evidence="1">PSII is composed of 1 copy each of membrane proteins PsbA, PsbB, PsbC, PsbD, PsbE, PsbF, PsbH, PsbI, PsbJ, PsbK, PsbL, PsbM, PsbT, PsbX, PsbY, PsbZ, Psb30/Ycf12, at least 3 peripheral proteins of the oxygen-evolving complex and a large number of cofactors. It forms dimeric complexes.</text>
</comment>
<comment type="subcellular location">
    <subcellularLocation>
        <location evidence="1">Plastid</location>
        <location evidence="1">Chloroplast thylakoid membrane</location>
        <topology evidence="1">Multi-pass membrane protein</topology>
    </subcellularLocation>
</comment>
<comment type="similarity">
    <text evidence="1">Belongs to the PsbB/PsbC family. PsbC subfamily.</text>
</comment>
<name>PSBC_ILLOL</name>